<gene>
    <name type="ordered locus">MJ1365</name>
</gene>
<sequence>MVIILRHVRVFNGVNECDIYLIGTAHVSKDSIEEVEKIISSVSPEGIAVELDDRRFFSLITNEEKKVDLKKVLKEGNFLKFFIYLILANSQKKIGESFGIKPGSEMKKAIEIASKYGLPIYLIDRDIDITLSRLMDRMTFKEKMKIFWELLNSDEEDLELDDDLLNDMVKNPEKFIKLLKEISPTIYEVLVDERDRFMAKRLFELSKNKNSLVAVVGAGHVEGIVRYLKKLENGNDIDLMELIKVKKRKKSLKKLLTYGISLTIISIFLYMICYALNNPELLKMITFQWILFTGGLSALGVLLARGKLITALVAFLSAPITTLVPLPLAAVGTIAGLVELKYREITDKDLVGIINAESIKELLNNNLFRVLLVATLSNLGASIGVFYCLGKFIGFLG</sequence>
<comment type="subcellular location">
    <subcellularLocation>
        <location evidence="2">Cell membrane</location>
        <topology evidence="2">Multi-pass membrane protein</topology>
    </subcellularLocation>
</comment>
<keyword id="KW-1003">Cell membrane</keyword>
<keyword id="KW-0472">Membrane</keyword>
<keyword id="KW-1185">Reference proteome</keyword>
<keyword id="KW-0812">Transmembrane</keyword>
<keyword id="KW-1133">Transmembrane helix</keyword>
<accession>Q58760</accession>
<reference key="1">
    <citation type="journal article" date="1996" name="Science">
        <title>Complete genome sequence of the methanogenic archaeon, Methanococcus jannaschii.</title>
        <authorList>
            <person name="Bult C.J."/>
            <person name="White O."/>
            <person name="Olsen G.J."/>
            <person name="Zhou L."/>
            <person name="Fleischmann R.D."/>
            <person name="Sutton G.G."/>
            <person name="Blake J.A."/>
            <person name="FitzGerald L.M."/>
            <person name="Clayton R.A."/>
            <person name="Gocayne J.D."/>
            <person name="Kerlavage A.R."/>
            <person name="Dougherty B.A."/>
            <person name="Tomb J.-F."/>
            <person name="Adams M.D."/>
            <person name="Reich C.I."/>
            <person name="Overbeek R."/>
            <person name="Kirkness E.F."/>
            <person name="Weinstock K.G."/>
            <person name="Merrick J.M."/>
            <person name="Glodek A."/>
            <person name="Scott J.L."/>
            <person name="Geoghagen N.S.M."/>
            <person name="Weidman J.F."/>
            <person name="Fuhrmann J.L."/>
            <person name="Nguyen D."/>
            <person name="Utterback T.R."/>
            <person name="Kelley J.M."/>
            <person name="Peterson J.D."/>
            <person name="Sadow P.W."/>
            <person name="Hanna M.C."/>
            <person name="Cotton M.D."/>
            <person name="Roberts K.M."/>
            <person name="Hurst M.A."/>
            <person name="Kaine B.P."/>
            <person name="Borodovsky M."/>
            <person name="Klenk H.-P."/>
            <person name="Fraser C.M."/>
            <person name="Smith H.O."/>
            <person name="Woese C.R."/>
            <person name="Venter J.C."/>
        </authorList>
    </citation>
    <scope>NUCLEOTIDE SEQUENCE [LARGE SCALE GENOMIC DNA]</scope>
    <source>
        <strain>ATCC 43067 / DSM 2661 / JAL-1 / JCM 10045 / NBRC 100440</strain>
    </source>
</reference>
<protein>
    <recommendedName>
        <fullName>Uncharacterized protein MJ1365</fullName>
    </recommendedName>
</protein>
<organism>
    <name type="scientific">Methanocaldococcus jannaschii (strain ATCC 43067 / DSM 2661 / JAL-1 / JCM 10045 / NBRC 100440)</name>
    <name type="common">Methanococcus jannaschii</name>
    <dbReference type="NCBI Taxonomy" id="243232"/>
    <lineage>
        <taxon>Archaea</taxon>
        <taxon>Methanobacteriati</taxon>
        <taxon>Methanobacteriota</taxon>
        <taxon>Methanomada group</taxon>
        <taxon>Methanococci</taxon>
        <taxon>Methanococcales</taxon>
        <taxon>Methanocaldococcaceae</taxon>
        <taxon>Methanocaldococcus</taxon>
    </lineage>
</organism>
<feature type="chain" id="PRO_0000107300" description="Uncharacterized protein MJ1365">
    <location>
        <begin position="1"/>
        <end position="397"/>
    </location>
</feature>
<feature type="transmembrane region" description="Helical" evidence="1">
    <location>
        <begin position="255"/>
        <end position="275"/>
    </location>
</feature>
<feature type="transmembrane region" description="Helical" evidence="1">
    <location>
        <begin position="284"/>
        <end position="304"/>
    </location>
</feature>
<feature type="transmembrane region" description="Helical" evidence="1">
    <location>
        <begin position="308"/>
        <end position="328"/>
    </location>
</feature>
<feature type="transmembrane region" description="Helical" evidence="1">
    <location>
        <begin position="370"/>
        <end position="390"/>
    </location>
</feature>
<evidence type="ECO:0000255" key="1"/>
<evidence type="ECO:0000305" key="2"/>
<dbReference type="EMBL" id="L77117">
    <property type="protein sequence ID" value="AAB99373.1"/>
    <property type="molecule type" value="Genomic_DNA"/>
</dbReference>
<dbReference type="PIR" id="D64470">
    <property type="entry name" value="D64470"/>
</dbReference>
<dbReference type="RefSeq" id="WP_010870882.1">
    <property type="nucleotide sequence ID" value="NC_000909.1"/>
</dbReference>
<dbReference type="SMR" id="Q58760"/>
<dbReference type="FunCoup" id="Q58760">
    <property type="interactions" value="66"/>
</dbReference>
<dbReference type="STRING" id="243232.MJ_1365"/>
<dbReference type="PaxDb" id="243232-MJ_1365"/>
<dbReference type="DNASU" id="1452268"/>
<dbReference type="EnsemblBacteria" id="AAB99373">
    <property type="protein sequence ID" value="AAB99373"/>
    <property type="gene ID" value="MJ_1365"/>
</dbReference>
<dbReference type="GeneID" id="1452268"/>
<dbReference type="KEGG" id="mja:MJ_1365"/>
<dbReference type="eggNOG" id="arCOG02142">
    <property type="taxonomic scope" value="Archaea"/>
</dbReference>
<dbReference type="HOGENOM" id="CLU_032780_1_0_2"/>
<dbReference type="InParanoid" id="Q58760"/>
<dbReference type="OrthoDB" id="185689at2157"/>
<dbReference type="PhylomeDB" id="Q58760"/>
<dbReference type="Proteomes" id="UP000000805">
    <property type="component" value="Chromosome"/>
</dbReference>
<dbReference type="GO" id="GO:0005886">
    <property type="term" value="C:plasma membrane"/>
    <property type="evidence" value="ECO:0007669"/>
    <property type="project" value="UniProtKB-SubCell"/>
</dbReference>
<dbReference type="CDD" id="cd14726">
    <property type="entry name" value="TraB_PrgY-like"/>
    <property type="match status" value="1"/>
</dbReference>
<dbReference type="InterPro" id="IPR002816">
    <property type="entry name" value="TraB/PrgY/GumN_fam"/>
</dbReference>
<dbReference type="InterPro" id="IPR005230">
    <property type="entry name" value="TraB_bac"/>
</dbReference>
<dbReference type="InterPro" id="IPR046345">
    <property type="entry name" value="TraB_PrgY-like"/>
</dbReference>
<dbReference type="NCBIfam" id="TIGR00261">
    <property type="entry name" value="traB"/>
    <property type="match status" value="1"/>
</dbReference>
<dbReference type="PANTHER" id="PTHR21530">
    <property type="entry name" value="PHEROMONE SHUTDOWN PROTEIN"/>
    <property type="match status" value="1"/>
</dbReference>
<dbReference type="PANTHER" id="PTHR21530:SF7">
    <property type="entry name" value="TRAB DOMAIN-CONTAINING PROTEIN"/>
    <property type="match status" value="1"/>
</dbReference>
<dbReference type="Pfam" id="PF01963">
    <property type="entry name" value="TraB_PrgY_gumN"/>
    <property type="match status" value="1"/>
</dbReference>
<name>Y1365_METJA</name>
<proteinExistence type="predicted"/>